<gene>
    <name evidence="1" type="primary">murC</name>
    <name type="ordered locus">YPO0556</name>
    <name type="ordered locus">y3625</name>
    <name type="ordered locus">YP_3628</name>
</gene>
<keyword id="KW-0002">3D-structure</keyword>
<keyword id="KW-0067">ATP-binding</keyword>
<keyword id="KW-0131">Cell cycle</keyword>
<keyword id="KW-0132">Cell division</keyword>
<keyword id="KW-0133">Cell shape</keyword>
<keyword id="KW-0961">Cell wall biogenesis/degradation</keyword>
<keyword id="KW-0963">Cytoplasm</keyword>
<keyword id="KW-0436">Ligase</keyword>
<keyword id="KW-0547">Nucleotide-binding</keyword>
<keyword id="KW-0573">Peptidoglycan synthesis</keyword>
<keyword id="KW-1185">Reference proteome</keyword>
<protein>
    <recommendedName>
        <fullName evidence="1">UDP-N-acetylmuramate--L-alanine ligase</fullName>
        <ecNumber evidence="1">6.3.2.8</ecNumber>
    </recommendedName>
    <alternativeName>
        <fullName evidence="1">UDP-N-acetylmuramoyl-L-alanine synthetase</fullName>
    </alternativeName>
</protein>
<reference key="1">
    <citation type="journal article" date="2001" name="Nature">
        <title>Genome sequence of Yersinia pestis, the causative agent of plague.</title>
        <authorList>
            <person name="Parkhill J."/>
            <person name="Wren B.W."/>
            <person name="Thomson N.R."/>
            <person name="Titball R.W."/>
            <person name="Holden M.T.G."/>
            <person name="Prentice M.B."/>
            <person name="Sebaihia M."/>
            <person name="James K.D."/>
            <person name="Churcher C.M."/>
            <person name="Mungall K.L."/>
            <person name="Baker S."/>
            <person name="Basham D."/>
            <person name="Bentley S.D."/>
            <person name="Brooks K."/>
            <person name="Cerdeno-Tarraga A.-M."/>
            <person name="Chillingworth T."/>
            <person name="Cronin A."/>
            <person name="Davies R.M."/>
            <person name="Davis P."/>
            <person name="Dougan G."/>
            <person name="Feltwell T."/>
            <person name="Hamlin N."/>
            <person name="Holroyd S."/>
            <person name="Jagels K."/>
            <person name="Karlyshev A.V."/>
            <person name="Leather S."/>
            <person name="Moule S."/>
            <person name="Oyston P.C.F."/>
            <person name="Quail M.A."/>
            <person name="Rutherford K.M."/>
            <person name="Simmonds M."/>
            <person name="Skelton J."/>
            <person name="Stevens K."/>
            <person name="Whitehead S."/>
            <person name="Barrell B.G."/>
        </authorList>
    </citation>
    <scope>NUCLEOTIDE SEQUENCE [LARGE SCALE GENOMIC DNA]</scope>
    <source>
        <strain>CO-92 / Biovar Orientalis</strain>
    </source>
</reference>
<reference key="2">
    <citation type="journal article" date="2002" name="J. Bacteriol.">
        <title>Genome sequence of Yersinia pestis KIM.</title>
        <authorList>
            <person name="Deng W."/>
            <person name="Burland V."/>
            <person name="Plunkett G. III"/>
            <person name="Boutin A."/>
            <person name="Mayhew G.F."/>
            <person name="Liss P."/>
            <person name="Perna N.T."/>
            <person name="Rose D.J."/>
            <person name="Mau B."/>
            <person name="Zhou S."/>
            <person name="Schwartz D.C."/>
            <person name="Fetherston J.D."/>
            <person name="Lindler L.E."/>
            <person name="Brubaker R.R."/>
            <person name="Plano G.V."/>
            <person name="Straley S.C."/>
            <person name="McDonough K.A."/>
            <person name="Nilles M.L."/>
            <person name="Matson J.S."/>
            <person name="Blattner F.R."/>
            <person name="Perry R.D."/>
        </authorList>
    </citation>
    <scope>NUCLEOTIDE SEQUENCE [LARGE SCALE GENOMIC DNA]</scope>
    <source>
        <strain>KIM10+ / Biovar Mediaevalis</strain>
    </source>
</reference>
<reference key="3">
    <citation type="journal article" date="2004" name="DNA Res.">
        <title>Complete genome sequence of Yersinia pestis strain 91001, an isolate avirulent to humans.</title>
        <authorList>
            <person name="Song Y."/>
            <person name="Tong Z."/>
            <person name="Wang J."/>
            <person name="Wang L."/>
            <person name="Guo Z."/>
            <person name="Han Y."/>
            <person name="Zhang J."/>
            <person name="Pei D."/>
            <person name="Zhou D."/>
            <person name="Qin H."/>
            <person name="Pang X."/>
            <person name="Han Y."/>
            <person name="Zhai J."/>
            <person name="Li M."/>
            <person name="Cui B."/>
            <person name="Qi Z."/>
            <person name="Jin L."/>
            <person name="Dai R."/>
            <person name="Chen F."/>
            <person name="Li S."/>
            <person name="Ye C."/>
            <person name="Du Z."/>
            <person name="Lin W."/>
            <person name="Wang J."/>
            <person name="Yu J."/>
            <person name="Yang H."/>
            <person name="Wang J."/>
            <person name="Huang P."/>
            <person name="Yang R."/>
        </authorList>
    </citation>
    <scope>NUCLEOTIDE SEQUENCE [LARGE SCALE GENOMIC DNA]</scope>
    <source>
        <strain>91001 / Biovar Mediaevalis</strain>
    </source>
</reference>
<organism>
    <name type="scientific">Yersinia pestis</name>
    <dbReference type="NCBI Taxonomy" id="632"/>
    <lineage>
        <taxon>Bacteria</taxon>
        <taxon>Pseudomonadati</taxon>
        <taxon>Pseudomonadota</taxon>
        <taxon>Gammaproteobacteria</taxon>
        <taxon>Enterobacterales</taxon>
        <taxon>Yersiniaceae</taxon>
        <taxon>Yersinia</taxon>
    </lineage>
</organism>
<accession>Q8ZIE8</accession>
<accession>Q0WJB1</accession>
<proteinExistence type="evidence at protein level"/>
<name>MURC_YERPE</name>
<comment type="function">
    <text evidence="1">Cell wall formation.</text>
</comment>
<comment type="catalytic activity">
    <reaction evidence="1">
        <text>UDP-N-acetyl-alpha-D-muramate + L-alanine + ATP = UDP-N-acetyl-alpha-D-muramoyl-L-alanine + ADP + phosphate + H(+)</text>
        <dbReference type="Rhea" id="RHEA:23372"/>
        <dbReference type="ChEBI" id="CHEBI:15378"/>
        <dbReference type="ChEBI" id="CHEBI:30616"/>
        <dbReference type="ChEBI" id="CHEBI:43474"/>
        <dbReference type="ChEBI" id="CHEBI:57972"/>
        <dbReference type="ChEBI" id="CHEBI:70757"/>
        <dbReference type="ChEBI" id="CHEBI:83898"/>
        <dbReference type="ChEBI" id="CHEBI:456216"/>
        <dbReference type="EC" id="6.3.2.8"/>
    </reaction>
</comment>
<comment type="pathway">
    <text evidence="1">Cell wall biogenesis; peptidoglycan biosynthesis.</text>
</comment>
<comment type="subcellular location">
    <subcellularLocation>
        <location evidence="1">Cytoplasm</location>
    </subcellularLocation>
</comment>
<comment type="similarity">
    <text evidence="1">Belongs to the MurCDEF family.</text>
</comment>
<comment type="sequence caution" evidence="2">
    <conflict type="erroneous initiation">
        <sequence resource="EMBL-CDS" id="AAM87173"/>
    </conflict>
</comment>
<comment type="sequence caution" evidence="2">
    <conflict type="erroneous initiation">
        <sequence resource="EMBL-CDS" id="AAS63776"/>
    </conflict>
</comment>
<dbReference type="EC" id="6.3.2.8" evidence="1"/>
<dbReference type="EMBL" id="AL590842">
    <property type="protein sequence ID" value="CAL19235.1"/>
    <property type="molecule type" value="Genomic_DNA"/>
</dbReference>
<dbReference type="EMBL" id="AE009952">
    <property type="protein sequence ID" value="AAM87173.1"/>
    <property type="status" value="ALT_INIT"/>
    <property type="molecule type" value="Genomic_DNA"/>
</dbReference>
<dbReference type="EMBL" id="AE017042">
    <property type="protein sequence ID" value="AAS63776.1"/>
    <property type="status" value="ALT_INIT"/>
    <property type="molecule type" value="Genomic_DNA"/>
</dbReference>
<dbReference type="PIR" id="AI0068">
    <property type="entry name" value="AI0068"/>
</dbReference>
<dbReference type="RefSeq" id="WP_002216457.1">
    <property type="nucleotide sequence ID" value="NZ_WUCM01000081.1"/>
</dbReference>
<dbReference type="RefSeq" id="YP_002345627.1">
    <property type="nucleotide sequence ID" value="NC_003143.1"/>
</dbReference>
<dbReference type="PDB" id="4HV4">
    <property type="method" value="X-ray"/>
    <property type="resolution" value="2.25 A"/>
    <property type="chains" value="A/B=1-491"/>
</dbReference>
<dbReference type="PDBsum" id="4HV4"/>
<dbReference type="SMR" id="Q8ZIE8"/>
<dbReference type="IntAct" id="Q8ZIE8">
    <property type="interactions" value="1"/>
</dbReference>
<dbReference type="STRING" id="214092.YPO0556"/>
<dbReference type="PaxDb" id="214092-YPO0556"/>
<dbReference type="DNASU" id="1148572"/>
<dbReference type="EnsemblBacteria" id="AAS63776">
    <property type="protein sequence ID" value="AAS63776"/>
    <property type="gene ID" value="YP_3628"/>
</dbReference>
<dbReference type="GeneID" id="57974059"/>
<dbReference type="KEGG" id="ype:YPO0556"/>
<dbReference type="KEGG" id="ypj:CH55_2293"/>
<dbReference type="KEGG" id="ypk:y3625"/>
<dbReference type="KEGG" id="ypl:CH46_361"/>
<dbReference type="KEGG" id="ypm:YP_3628"/>
<dbReference type="KEGG" id="ypv:BZ15_3018"/>
<dbReference type="KEGG" id="ypw:CH59_1308"/>
<dbReference type="PATRIC" id="fig|214092.21.peg.809"/>
<dbReference type="eggNOG" id="COG0773">
    <property type="taxonomic scope" value="Bacteria"/>
</dbReference>
<dbReference type="HOGENOM" id="CLU_028104_2_2_6"/>
<dbReference type="OMA" id="DITYQLR"/>
<dbReference type="OrthoDB" id="9804126at2"/>
<dbReference type="UniPathway" id="UPA00219"/>
<dbReference type="EvolutionaryTrace" id="Q8ZIE8"/>
<dbReference type="Proteomes" id="UP000000815">
    <property type="component" value="Chromosome"/>
</dbReference>
<dbReference type="Proteomes" id="UP000001019">
    <property type="component" value="Chromosome"/>
</dbReference>
<dbReference type="Proteomes" id="UP000002490">
    <property type="component" value="Chromosome"/>
</dbReference>
<dbReference type="GO" id="GO:0005737">
    <property type="term" value="C:cytoplasm"/>
    <property type="evidence" value="ECO:0007669"/>
    <property type="project" value="UniProtKB-SubCell"/>
</dbReference>
<dbReference type="GO" id="GO:0005524">
    <property type="term" value="F:ATP binding"/>
    <property type="evidence" value="ECO:0007669"/>
    <property type="project" value="UniProtKB-UniRule"/>
</dbReference>
<dbReference type="GO" id="GO:0008763">
    <property type="term" value="F:UDP-N-acetylmuramate-L-alanine ligase activity"/>
    <property type="evidence" value="ECO:0007669"/>
    <property type="project" value="UniProtKB-UniRule"/>
</dbReference>
<dbReference type="GO" id="GO:0051301">
    <property type="term" value="P:cell division"/>
    <property type="evidence" value="ECO:0007669"/>
    <property type="project" value="UniProtKB-KW"/>
</dbReference>
<dbReference type="GO" id="GO:0071555">
    <property type="term" value="P:cell wall organization"/>
    <property type="evidence" value="ECO:0007669"/>
    <property type="project" value="UniProtKB-KW"/>
</dbReference>
<dbReference type="GO" id="GO:0009252">
    <property type="term" value="P:peptidoglycan biosynthetic process"/>
    <property type="evidence" value="ECO:0007669"/>
    <property type="project" value="UniProtKB-UniRule"/>
</dbReference>
<dbReference type="GO" id="GO:0008360">
    <property type="term" value="P:regulation of cell shape"/>
    <property type="evidence" value="ECO:0007669"/>
    <property type="project" value="UniProtKB-KW"/>
</dbReference>
<dbReference type="CDD" id="cd01983">
    <property type="entry name" value="SIMIBI"/>
    <property type="match status" value="1"/>
</dbReference>
<dbReference type="FunFam" id="3.40.1190.10:FF:000001">
    <property type="entry name" value="UDP-N-acetylmuramate--L-alanine ligase"/>
    <property type="match status" value="1"/>
</dbReference>
<dbReference type="FunFam" id="3.40.50.720:FF:000046">
    <property type="entry name" value="UDP-N-acetylmuramate--L-alanine ligase"/>
    <property type="match status" value="1"/>
</dbReference>
<dbReference type="FunFam" id="3.90.190.20:FF:000001">
    <property type="entry name" value="UDP-N-acetylmuramate--L-alanine ligase"/>
    <property type="match status" value="1"/>
</dbReference>
<dbReference type="Gene3D" id="3.90.190.20">
    <property type="entry name" value="Mur ligase, C-terminal domain"/>
    <property type="match status" value="1"/>
</dbReference>
<dbReference type="Gene3D" id="3.40.1190.10">
    <property type="entry name" value="Mur-like, catalytic domain"/>
    <property type="match status" value="1"/>
</dbReference>
<dbReference type="Gene3D" id="3.40.50.720">
    <property type="entry name" value="NAD(P)-binding Rossmann-like Domain"/>
    <property type="match status" value="1"/>
</dbReference>
<dbReference type="HAMAP" id="MF_00046">
    <property type="entry name" value="MurC"/>
    <property type="match status" value="1"/>
</dbReference>
<dbReference type="InterPro" id="IPR036565">
    <property type="entry name" value="Mur-like_cat_sf"/>
</dbReference>
<dbReference type="InterPro" id="IPR004101">
    <property type="entry name" value="Mur_ligase_C"/>
</dbReference>
<dbReference type="InterPro" id="IPR036615">
    <property type="entry name" value="Mur_ligase_C_dom_sf"/>
</dbReference>
<dbReference type="InterPro" id="IPR013221">
    <property type="entry name" value="Mur_ligase_cen"/>
</dbReference>
<dbReference type="InterPro" id="IPR000713">
    <property type="entry name" value="Mur_ligase_N"/>
</dbReference>
<dbReference type="InterPro" id="IPR050061">
    <property type="entry name" value="MurCDEF_pg_biosynth"/>
</dbReference>
<dbReference type="InterPro" id="IPR005758">
    <property type="entry name" value="UDP-N-AcMur_Ala_ligase_MurC"/>
</dbReference>
<dbReference type="NCBIfam" id="TIGR01082">
    <property type="entry name" value="murC"/>
    <property type="match status" value="1"/>
</dbReference>
<dbReference type="PANTHER" id="PTHR43445:SF3">
    <property type="entry name" value="UDP-N-ACETYLMURAMATE--L-ALANINE LIGASE"/>
    <property type="match status" value="1"/>
</dbReference>
<dbReference type="PANTHER" id="PTHR43445">
    <property type="entry name" value="UDP-N-ACETYLMURAMATE--L-ALANINE LIGASE-RELATED"/>
    <property type="match status" value="1"/>
</dbReference>
<dbReference type="Pfam" id="PF01225">
    <property type="entry name" value="Mur_ligase"/>
    <property type="match status" value="1"/>
</dbReference>
<dbReference type="Pfam" id="PF02875">
    <property type="entry name" value="Mur_ligase_C"/>
    <property type="match status" value="1"/>
</dbReference>
<dbReference type="Pfam" id="PF08245">
    <property type="entry name" value="Mur_ligase_M"/>
    <property type="match status" value="1"/>
</dbReference>
<dbReference type="SUPFAM" id="SSF51984">
    <property type="entry name" value="MurCD N-terminal domain"/>
    <property type="match status" value="1"/>
</dbReference>
<dbReference type="SUPFAM" id="SSF53623">
    <property type="entry name" value="MurD-like peptide ligases, catalytic domain"/>
    <property type="match status" value="1"/>
</dbReference>
<dbReference type="SUPFAM" id="SSF53244">
    <property type="entry name" value="MurD-like peptide ligases, peptide-binding domain"/>
    <property type="match status" value="1"/>
</dbReference>
<feature type="chain" id="PRO_0000182190" description="UDP-N-acetylmuramate--L-alanine ligase">
    <location>
        <begin position="1"/>
        <end position="491"/>
    </location>
</feature>
<feature type="binding site" evidence="1">
    <location>
        <begin position="126"/>
        <end position="132"/>
    </location>
    <ligand>
        <name>ATP</name>
        <dbReference type="ChEBI" id="CHEBI:30616"/>
    </ligand>
</feature>
<feature type="helix" evidence="3">
    <location>
        <begin position="16"/>
        <end position="18"/>
    </location>
</feature>
<feature type="strand" evidence="3">
    <location>
        <begin position="21"/>
        <end position="25"/>
    </location>
</feature>
<feature type="turn" evidence="3">
    <location>
        <begin position="26"/>
        <end position="28"/>
    </location>
</feature>
<feature type="helix" evidence="3">
    <location>
        <begin position="32"/>
        <end position="41"/>
    </location>
</feature>
<feature type="strand" evidence="3">
    <location>
        <begin position="45"/>
        <end position="49"/>
    </location>
</feature>
<feature type="helix" evidence="3">
    <location>
        <begin position="55"/>
        <end position="62"/>
    </location>
</feature>
<feature type="strand" evidence="3">
    <location>
        <begin position="66"/>
        <end position="70"/>
    </location>
</feature>
<feature type="helix" evidence="3">
    <location>
        <begin position="73"/>
        <end position="76"/>
    </location>
</feature>
<feature type="strand" evidence="3">
    <location>
        <begin position="80"/>
        <end position="84"/>
    </location>
</feature>
<feature type="helix" evidence="3">
    <location>
        <begin position="93"/>
        <end position="100"/>
    </location>
</feature>
<feature type="strand" evidence="3">
    <location>
        <begin position="105"/>
        <end position="107"/>
    </location>
</feature>
<feature type="helix" evidence="3">
    <location>
        <begin position="108"/>
        <end position="116"/>
    </location>
</feature>
<feature type="strand" evidence="3">
    <location>
        <begin position="119"/>
        <end position="125"/>
    </location>
</feature>
<feature type="strand" evidence="3">
    <location>
        <begin position="127"/>
        <end position="129"/>
    </location>
</feature>
<feature type="helix" evidence="3">
    <location>
        <begin position="130"/>
        <end position="143"/>
    </location>
</feature>
<feature type="strand" evidence="3">
    <location>
        <begin position="149"/>
        <end position="156"/>
    </location>
</feature>
<feature type="turn" evidence="3">
    <location>
        <begin position="157"/>
        <end position="160"/>
    </location>
</feature>
<feature type="strand" evidence="3">
    <location>
        <begin position="161"/>
        <end position="164"/>
    </location>
</feature>
<feature type="strand" evidence="3">
    <location>
        <begin position="167"/>
        <end position="174"/>
    </location>
</feature>
<feature type="helix" evidence="3">
    <location>
        <begin position="178"/>
        <end position="184"/>
    </location>
</feature>
<feature type="strand" evidence="3">
    <location>
        <begin position="188"/>
        <end position="192"/>
    </location>
</feature>
<feature type="helix" evidence="3">
    <location>
        <begin position="206"/>
        <end position="218"/>
    </location>
</feature>
<feature type="strand" evidence="3">
    <location>
        <begin position="226"/>
        <end position="230"/>
    </location>
</feature>
<feature type="helix" evidence="3">
    <location>
        <begin position="234"/>
        <end position="239"/>
    </location>
</feature>
<feature type="helix" evidence="3">
    <location>
        <begin position="240"/>
        <end position="242"/>
    </location>
</feature>
<feature type="strand" evidence="3">
    <location>
        <begin position="247"/>
        <end position="253"/>
    </location>
</feature>
<feature type="strand" evidence="3">
    <location>
        <begin position="257"/>
        <end position="266"/>
    </location>
</feature>
<feature type="strand" evidence="3">
    <location>
        <begin position="269"/>
        <end position="275"/>
    </location>
</feature>
<feature type="strand" evidence="3">
    <location>
        <begin position="282"/>
        <end position="288"/>
    </location>
</feature>
<feature type="helix" evidence="3">
    <location>
        <begin position="291"/>
        <end position="307"/>
    </location>
</feature>
<feature type="helix" evidence="3">
    <location>
        <begin position="311"/>
        <end position="320"/>
    </location>
</feature>
<feature type="strand" evidence="3">
    <location>
        <begin position="327"/>
        <end position="336"/>
    </location>
</feature>
<feature type="helix" evidence="3">
    <location>
        <begin position="337"/>
        <end position="340"/>
    </location>
</feature>
<feature type="strand" evidence="3">
    <location>
        <begin position="343"/>
        <end position="351"/>
    </location>
</feature>
<feature type="helix" evidence="3">
    <location>
        <begin position="356"/>
        <end position="369"/>
    </location>
</feature>
<feature type="strand" evidence="3">
    <location>
        <begin position="373"/>
        <end position="379"/>
    </location>
</feature>
<feature type="helix" evidence="3">
    <location>
        <begin position="384"/>
        <end position="389"/>
    </location>
</feature>
<feature type="helix" evidence="3">
    <location>
        <begin position="391"/>
        <end position="398"/>
    </location>
</feature>
<feature type="strand" evidence="3">
    <location>
        <begin position="401"/>
        <end position="407"/>
    </location>
</feature>
<feature type="helix" evidence="3">
    <location>
        <begin position="422"/>
        <end position="430"/>
    </location>
</feature>
<feature type="strand" evidence="3">
    <location>
        <begin position="438"/>
        <end position="440"/>
    </location>
</feature>
<feature type="turn" evidence="3">
    <location>
        <begin position="443"/>
        <end position="445"/>
    </location>
</feature>
<feature type="helix" evidence="3">
    <location>
        <begin position="446"/>
        <end position="453"/>
    </location>
</feature>
<feature type="strand" evidence="3">
    <location>
        <begin position="458"/>
        <end position="463"/>
    </location>
</feature>
<feature type="helix" evidence="3">
    <location>
        <begin position="468"/>
        <end position="477"/>
    </location>
</feature>
<feature type="turn" evidence="3">
    <location>
        <begin position="478"/>
        <end position="480"/>
    </location>
</feature>
<evidence type="ECO:0000255" key="1">
    <source>
        <dbReference type="HAMAP-Rule" id="MF_00046"/>
    </source>
</evidence>
<evidence type="ECO:0000305" key="2"/>
<evidence type="ECO:0007829" key="3">
    <source>
        <dbReference type="PDB" id="4HV4"/>
    </source>
</evidence>
<sequence>MNTQQLAKLRTIVPEMRRVRHIHFVGIGGAGMGGIAEVLANEGYQISGSDLAPNSVTQHLTALGAQIYFHHRPENVLDASVVVVSTAISADNPEIVAAREARIPVIRRAEMLAELMRYRHGIAVAGTHGKTTTTAMLSSIYAEAGLDPTFVNGGLVKAAGTHARLGSSRYLIAEADESDASFLHLQPMVAIVTNIEADHMDTYQGDFENLKQTFINFLHNLPFYGRAVMCIDDPVVRELLPRVGRHITTYGFSDDADVQIASYRQEGPQGHFTLRRQDKPLIEVTLNAPGRHNALNAAAAVAVATEEGIEDEDILRALVGFQGTGRRFDFLGNFPLAPVNGKEGSAMLVDDYGHHPTEVDATIKAARAGWPDKRIVMLFQPHRYTRTRDLYDDFANVLSQVDVLLMLDVYAAGEPPIPGADSRALCRTIRNRGKLDPILVPDSESAPEMLAQILNGEDLILVQGAGNIGKIARKLAEHKLQPQLKDEEHHG</sequence>